<keyword id="KW-0963">Cytoplasm</keyword>
<keyword id="KW-0539">Nucleus</keyword>
<keyword id="KW-1185">Reference proteome</keyword>
<organism>
    <name type="scientific">Danio rerio</name>
    <name type="common">Zebrafish</name>
    <name type="synonym">Brachydanio rerio</name>
    <dbReference type="NCBI Taxonomy" id="7955"/>
    <lineage>
        <taxon>Eukaryota</taxon>
        <taxon>Metazoa</taxon>
        <taxon>Chordata</taxon>
        <taxon>Craniata</taxon>
        <taxon>Vertebrata</taxon>
        <taxon>Euteleostomi</taxon>
        <taxon>Actinopterygii</taxon>
        <taxon>Neopterygii</taxon>
        <taxon>Teleostei</taxon>
        <taxon>Ostariophysi</taxon>
        <taxon>Cypriniformes</taxon>
        <taxon>Danionidae</taxon>
        <taxon>Danioninae</taxon>
        <taxon>Danio</taxon>
    </lineage>
</organism>
<sequence length="109" mass="12094">MASQREENSTQMQNEVVELAYSLARCKLENLLNKSMRIRMTDGRTLVGLFLCTDRDCNVILGSAQEFLKSTDSLSQGEPRVLGLAMIPGHHVVSIEVETESLQTTTHGL</sequence>
<proteinExistence type="inferred from homology"/>
<feature type="chain" id="PRO_0000299157" description="N-alpha-acetyltransferase 38, NatC auxiliary subunit">
    <location>
        <begin position="1"/>
        <end position="109"/>
    </location>
</feature>
<feature type="domain" description="Sm" evidence="2">
    <location>
        <begin position="23"/>
        <end position="101"/>
    </location>
</feature>
<accession>A2BIG9</accession>
<gene>
    <name type="primary">naa38</name>
    <name type="synonym">lsmd1</name>
    <name type="ORF">si:ch211-30G3.3</name>
</gene>
<reference key="1">
    <citation type="journal article" date="2013" name="Nature">
        <title>The zebrafish reference genome sequence and its relationship to the human genome.</title>
        <authorList>
            <person name="Howe K."/>
            <person name="Clark M.D."/>
            <person name="Torroja C.F."/>
            <person name="Torrance J."/>
            <person name="Berthelot C."/>
            <person name="Muffato M."/>
            <person name="Collins J.E."/>
            <person name="Humphray S."/>
            <person name="McLaren K."/>
            <person name="Matthews L."/>
            <person name="McLaren S."/>
            <person name="Sealy I."/>
            <person name="Caccamo M."/>
            <person name="Churcher C."/>
            <person name="Scott C."/>
            <person name="Barrett J.C."/>
            <person name="Koch R."/>
            <person name="Rauch G.J."/>
            <person name="White S."/>
            <person name="Chow W."/>
            <person name="Kilian B."/>
            <person name="Quintais L.T."/>
            <person name="Guerra-Assuncao J.A."/>
            <person name="Zhou Y."/>
            <person name="Gu Y."/>
            <person name="Yen J."/>
            <person name="Vogel J.H."/>
            <person name="Eyre T."/>
            <person name="Redmond S."/>
            <person name="Banerjee R."/>
            <person name="Chi J."/>
            <person name="Fu B."/>
            <person name="Langley E."/>
            <person name="Maguire S.F."/>
            <person name="Laird G.K."/>
            <person name="Lloyd D."/>
            <person name="Kenyon E."/>
            <person name="Donaldson S."/>
            <person name="Sehra H."/>
            <person name="Almeida-King J."/>
            <person name="Loveland J."/>
            <person name="Trevanion S."/>
            <person name="Jones M."/>
            <person name="Quail M."/>
            <person name="Willey D."/>
            <person name="Hunt A."/>
            <person name="Burton J."/>
            <person name="Sims S."/>
            <person name="McLay K."/>
            <person name="Plumb B."/>
            <person name="Davis J."/>
            <person name="Clee C."/>
            <person name="Oliver K."/>
            <person name="Clark R."/>
            <person name="Riddle C."/>
            <person name="Elliot D."/>
            <person name="Threadgold G."/>
            <person name="Harden G."/>
            <person name="Ware D."/>
            <person name="Begum S."/>
            <person name="Mortimore B."/>
            <person name="Kerry G."/>
            <person name="Heath P."/>
            <person name="Phillimore B."/>
            <person name="Tracey A."/>
            <person name="Corby N."/>
            <person name="Dunn M."/>
            <person name="Johnson C."/>
            <person name="Wood J."/>
            <person name="Clark S."/>
            <person name="Pelan S."/>
            <person name="Griffiths G."/>
            <person name="Smith M."/>
            <person name="Glithero R."/>
            <person name="Howden P."/>
            <person name="Barker N."/>
            <person name="Lloyd C."/>
            <person name="Stevens C."/>
            <person name="Harley J."/>
            <person name="Holt K."/>
            <person name="Panagiotidis G."/>
            <person name="Lovell J."/>
            <person name="Beasley H."/>
            <person name="Henderson C."/>
            <person name="Gordon D."/>
            <person name="Auger K."/>
            <person name="Wright D."/>
            <person name="Collins J."/>
            <person name="Raisen C."/>
            <person name="Dyer L."/>
            <person name="Leung K."/>
            <person name="Robertson L."/>
            <person name="Ambridge K."/>
            <person name="Leongamornlert D."/>
            <person name="McGuire S."/>
            <person name="Gilderthorp R."/>
            <person name="Griffiths C."/>
            <person name="Manthravadi D."/>
            <person name="Nichol S."/>
            <person name="Barker G."/>
            <person name="Whitehead S."/>
            <person name="Kay M."/>
            <person name="Brown J."/>
            <person name="Murnane C."/>
            <person name="Gray E."/>
            <person name="Humphries M."/>
            <person name="Sycamore N."/>
            <person name="Barker D."/>
            <person name="Saunders D."/>
            <person name="Wallis J."/>
            <person name="Babbage A."/>
            <person name="Hammond S."/>
            <person name="Mashreghi-Mohammadi M."/>
            <person name="Barr L."/>
            <person name="Martin S."/>
            <person name="Wray P."/>
            <person name="Ellington A."/>
            <person name="Matthews N."/>
            <person name="Ellwood M."/>
            <person name="Woodmansey R."/>
            <person name="Clark G."/>
            <person name="Cooper J."/>
            <person name="Tromans A."/>
            <person name="Grafham D."/>
            <person name="Skuce C."/>
            <person name="Pandian R."/>
            <person name="Andrews R."/>
            <person name="Harrison E."/>
            <person name="Kimberley A."/>
            <person name="Garnett J."/>
            <person name="Fosker N."/>
            <person name="Hall R."/>
            <person name="Garner P."/>
            <person name="Kelly D."/>
            <person name="Bird C."/>
            <person name="Palmer S."/>
            <person name="Gehring I."/>
            <person name="Berger A."/>
            <person name="Dooley C.M."/>
            <person name="Ersan-Urun Z."/>
            <person name="Eser C."/>
            <person name="Geiger H."/>
            <person name="Geisler M."/>
            <person name="Karotki L."/>
            <person name="Kirn A."/>
            <person name="Konantz J."/>
            <person name="Konantz M."/>
            <person name="Oberlander M."/>
            <person name="Rudolph-Geiger S."/>
            <person name="Teucke M."/>
            <person name="Lanz C."/>
            <person name="Raddatz G."/>
            <person name="Osoegawa K."/>
            <person name="Zhu B."/>
            <person name="Rapp A."/>
            <person name="Widaa S."/>
            <person name="Langford C."/>
            <person name="Yang F."/>
            <person name="Schuster S.C."/>
            <person name="Carter N.P."/>
            <person name="Harrow J."/>
            <person name="Ning Z."/>
            <person name="Herrero J."/>
            <person name="Searle S.M."/>
            <person name="Enright A."/>
            <person name="Geisler R."/>
            <person name="Plasterk R.H."/>
            <person name="Lee C."/>
            <person name="Westerfield M."/>
            <person name="de Jong P.J."/>
            <person name="Zon L.I."/>
            <person name="Postlethwait J.H."/>
            <person name="Nusslein-Volhard C."/>
            <person name="Hubbard T.J."/>
            <person name="Roest Crollius H."/>
            <person name="Rogers J."/>
            <person name="Stemple D.L."/>
        </authorList>
    </citation>
    <scope>NUCLEOTIDE SEQUENCE [LARGE SCALE GENOMIC DNA]</scope>
    <source>
        <strain>Tuebingen</strain>
    </source>
</reference>
<dbReference type="EMBL" id="BX927335">
    <property type="protein sequence ID" value="CAM14241.1"/>
    <property type="molecule type" value="Genomic_DNA"/>
</dbReference>
<dbReference type="RefSeq" id="NP_001153763.1">
    <property type="nucleotide sequence ID" value="NM_001160291.1"/>
</dbReference>
<dbReference type="SMR" id="A2BIG9"/>
<dbReference type="FunCoup" id="A2BIG9">
    <property type="interactions" value="1611"/>
</dbReference>
<dbReference type="STRING" id="7955.ENSDARP00000141836"/>
<dbReference type="PaxDb" id="7955-ENSDARP00000088249"/>
<dbReference type="PeptideAtlas" id="A2BIG9"/>
<dbReference type="Ensembl" id="ENSDART00000171107">
    <property type="protein sequence ID" value="ENSDARP00000141836"/>
    <property type="gene ID" value="ENSDARG00000099122"/>
</dbReference>
<dbReference type="GeneID" id="335819"/>
<dbReference type="KEGG" id="dre:335819"/>
<dbReference type="AGR" id="ZFIN:ZDB-GENE-030131-7762"/>
<dbReference type="CTD" id="84316"/>
<dbReference type="ZFIN" id="ZDB-GENE-030131-7762">
    <property type="gene designation" value="naa38"/>
</dbReference>
<dbReference type="eggNOG" id="KOG3168">
    <property type="taxonomic scope" value="Eukaryota"/>
</dbReference>
<dbReference type="HOGENOM" id="CLU_076902_4_3_1"/>
<dbReference type="InParanoid" id="A2BIG9"/>
<dbReference type="OMA" id="THEYRCP"/>
<dbReference type="OrthoDB" id="368909at2759"/>
<dbReference type="PhylomeDB" id="A2BIG9"/>
<dbReference type="TreeFam" id="TF323867"/>
<dbReference type="PRO" id="PR:A2BIG9"/>
<dbReference type="Proteomes" id="UP000000437">
    <property type="component" value="Chromosome 5"/>
</dbReference>
<dbReference type="Bgee" id="ENSDARG00000099122">
    <property type="expression patterns" value="Expressed in bone element and 30 other cell types or tissues"/>
</dbReference>
<dbReference type="GO" id="GO:0005737">
    <property type="term" value="C:cytoplasm"/>
    <property type="evidence" value="ECO:0000250"/>
    <property type="project" value="UniProtKB"/>
</dbReference>
<dbReference type="GO" id="GO:0031417">
    <property type="term" value="C:NatC complex"/>
    <property type="evidence" value="ECO:0000250"/>
    <property type="project" value="UniProtKB"/>
</dbReference>
<dbReference type="GO" id="GO:0005634">
    <property type="term" value="C:nucleus"/>
    <property type="evidence" value="ECO:0000250"/>
    <property type="project" value="UniProtKB"/>
</dbReference>
<dbReference type="GO" id="GO:0003723">
    <property type="term" value="F:RNA binding"/>
    <property type="evidence" value="ECO:0007669"/>
    <property type="project" value="InterPro"/>
</dbReference>
<dbReference type="GO" id="GO:0043066">
    <property type="term" value="P:negative regulation of apoptotic process"/>
    <property type="evidence" value="ECO:0000250"/>
    <property type="project" value="UniProtKB"/>
</dbReference>
<dbReference type="CDD" id="cd06168">
    <property type="entry name" value="LSMD1"/>
    <property type="match status" value="1"/>
</dbReference>
<dbReference type="FunFam" id="2.30.30.100:FF:000028">
    <property type="entry name" value="N-alpha-acetyltransferase 38, NatC auxiliary subunit"/>
    <property type="match status" value="1"/>
</dbReference>
<dbReference type="Gene3D" id="2.30.30.100">
    <property type="match status" value="1"/>
</dbReference>
<dbReference type="InterPro" id="IPR010920">
    <property type="entry name" value="LSM_dom_sf"/>
</dbReference>
<dbReference type="InterPro" id="IPR034110">
    <property type="entry name" value="LSMD1_Sm"/>
</dbReference>
<dbReference type="InterPro" id="IPR047575">
    <property type="entry name" value="Sm"/>
</dbReference>
<dbReference type="InterPro" id="IPR001163">
    <property type="entry name" value="Sm_dom_euk/arc"/>
</dbReference>
<dbReference type="InterPro" id="IPR050914">
    <property type="entry name" value="snRNP_SmB/NAA38-like"/>
</dbReference>
<dbReference type="PANTHER" id="PTHR10701:SF5">
    <property type="entry name" value="N-ALPHA-ACETYLTRANSFERASE 38, NATC AUXILIARY SUBUNIT"/>
    <property type="match status" value="1"/>
</dbReference>
<dbReference type="PANTHER" id="PTHR10701">
    <property type="entry name" value="SMALL NUCLEAR RIBONUCLEOPROTEIN-ASSOCIATED PROTEIN B AND N"/>
    <property type="match status" value="1"/>
</dbReference>
<dbReference type="Pfam" id="PF01423">
    <property type="entry name" value="LSM"/>
    <property type="match status" value="1"/>
</dbReference>
<dbReference type="SMART" id="SM00651">
    <property type="entry name" value="Sm"/>
    <property type="match status" value="1"/>
</dbReference>
<dbReference type="SUPFAM" id="SSF50182">
    <property type="entry name" value="Sm-like ribonucleoproteins"/>
    <property type="match status" value="1"/>
</dbReference>
<dbReference type="PROSITE" id="PS52002">
    <property type="entry name" value="SM"/>
    <property type="match status" value="1"/>
</dbReference>
<comment type="function">
    <text evidence="1">Auxillary component of the N-terminal acetyltransferase C (NatC) complex which catalyzes acetylation of N-terminal methionine residues. N-terminal acetylation protects proteins from ubiquitination and degradation by the N-end rule pathway.</text>
</comment>
<comment type="subunit">
    <text evidence="1">Component of the N-terminal acetyltransferase C (NatC) complex.</text>
</comment>
<comment type="subcellular location">
    <subcellularLocation>
        <location evidence="1">Cytoplasm</location>
    </subcellularLocation>
    <subcellularLocation>
        <location evidence="1">Nucleus</location>
    </subcellularLocation>
</comment>
<comment type="similarity">
    <text evidence="3">Belongs to the snRNP Sm proteins family.</text>
</comment>
<name>NAA38_DANRE</name>
<protein>
    <recommendedName>
        <fullName>N-alpha-acetyltransferase 38, NatC auxiliary subunit</fullName>
    </recommendedName>
    <alternativeName>
        <fullName>LSM domain-containing protein 1</fullName>
    </alternativeName>
</protein>
<evidence type="ECO:0000250" key="1">
    <source>
        <dbReference type="UniProtKB" id="Q9BRA0"/>
    </source>
</evidence>
<evidence type="ECO:0000255" key="2">
    <source>
        <dbReference type="PROSITE-ProRule" id="PRU01346"/>
    </source>
</evidence>
<evidence type="ECO:0000305" key="3"/>